<feature type="chain" id="PRO_1000213340" description="UPF0213 protein YhbQ">
    <location>
        <begin position="1"/>
        <end position="100"/>
    </location>
</feature>
<feature type="domain" description="GIY-YIG" evidence="1">
    <location>
        <begin position="2"/>
        <end position="77"/>
    </location>
</feature>
<gene>
    <name evidence="1" type="primary">yhbQ</name>
    <name type="ordered locus">BWG_2859</name>
</gene>
<accession>C4ZSP6</accession>
<sequence length="100" mass="11270">MTPWFLYLIRTADNKLYTGITTDVERRYQQHQSGKGAKALRGKGELTLVFSAPVGDRSLALRAEYRVKQLTKRQKERLVAEGAGFAELLSSLQTPEIKSD</sequence>
<name>YHBQ_ECOBW</name>
<reference key="1">
    <citation type="journal article" date="2009" name="J. Bacteriol.">
        <title>Genomic sequencing reveals regulatory mutations and recombinational events in the widely used MC4100 lineage of Escherichia coli K-12.</title>
        <authorList>
            <person name="Ferenci T."/>
            <person name="Zhou Z."/>
            <person name="Betteridge T."/>
            <person name="Ren Y."/>
            <person name="Liu Y."/>
            <person name="Feng L."/>
            <person name="Reeves P.R."/>
            <person name="Wang L."/>
        </authorList>
    </citation>
    <scope>NUCLEOTIDE SEQUENCE [LARGE SCALE GENOMIC DNA]</scope>
    <source>
        <strain>K12 / MC4100 / BW2952</strain>
    </source>
</reference>
<proteinExistence type="inferred from homology"/>
<evidence type="ECO:0000255" key="1">
    <source>
        <dbReference type="HAMAP-Rule" id="MF_01029"/>
    </source>
</evidence>
<dbReference type="EMBL" id="CP001396">
    <property type="protein sequence ID" value="ACR64343.1"/>
    <property type="molecule type" value="Genomic_DNA"/>
</dbReference>
<dbReference type="RefSeq" id="WP_000189333.1">
    <property type="nucleotide sequence ID" value="NC_012759.1"/>
</dbReference>
<dbReference type="SMR" id="C4ZSP6"/>
<dbReference type="KEGG" id="ebw:BWG_2859"/>
<dbReference type="HOGENOM" id="CLU_135650_0_1_6"/>
<dbReference type="CDD" id="cd10456">
    <property type="entry name" value="GIY-YIG_UPF0213"/>
    <property type="match status" value="1"/>
</dbReference>
<dbReference type="FunFam" id="3.40.1440.10:FF:000002">
    <property type="entry name" value="UPF0213 protein YhbQ"/>
    <property type="match status" value="1"/>
</dbReference>
<dbReference type="Gene3D" id="3.40.1440.10">
    <property type="entry name" value="GIY-YIG endonuclease"/>
    <property type="match status" value="1"/>
</dbReference>
<dbReference type="HAMAP" id="MF_01029">
    <property type="entry name" value="UPF0213"/>
    <property type="match status" value="1"/>
</dbReference>
<dbReference type="InterPro" id="IPR000305">
    <property type="entry name" value="GIY-YIG_endonuc"/>
</dbReference>
<dbReference type="InterPro" id="IPR035901">
    <property type="entry name" value="GIY-YIG_endonuc_sf"/>
</dbReference>
<dbReference type="InterPro" id="IPR050190">
    <property type="entry name" value="UPF0213_domain"/>
</dbReference>
<dbReference type="InterPro" id="IPR022992">
    <property type="entry name" value="UPF0213_GIY-YIG_endonuc"/>
</dbReference>
<dbReference type="PANTHER" id="PTHR34477">
    <property type="entry name" value="UPF0213 PROTEIN YHBQ"/>
    <property type="match status" value="1"/>
</dbReference>
<dbReference type="PANTHER" id="PTHR34477:SF1">
    <property type="entry name" value="UPF0213 PROTEIN YHBQ"/>
    <property type="match status" value="1"/>
</dbReference>
<dbReference type="Pfam" id="PF01541">
    <property type="entry name" value="GIY-YIG"/>
    <property type="match status" value="1"/>
</dbReference>
<dbReference type="SMART" id="SM00465">
    <property type="entry name" value="GIYc"/>
    <property type="match status" value="1"/>
</dbReference>
<dbReference type="SUPFAM" id="SSF82771">
    <property type="entry name" value="GIY-YIG endonuclease"/>
    <property type="match status" value="1"/>
</dbReference>
<dbReference type="PROSITE" id="PS50164">
    <property type="entry name" value="GIY_YIG"/>
    <property type="match status" value="1"/>
</dbReference>
<protein>
    <recommendedName>
        <fullName evidence="1">UPF0213 protein YhbQ</fullName>
    </recommendedName>
</protein>
<organism>
    <name type="scientific">Escherichia coli (strain K12 / MC4100 / BW2952)</name>
    <dbReference type="NCBI Taxonomy" id="595496"/>
    <lineage>
        <taxon>Bacteria</taxon>
        <taxon>Pseudomonadati</taxon>
        <taxon>Pseudomonadota</taxon>
        <taxon>Gammaproteobacteria</taxon>
        <taxon>Enterobacterales</taxon>
        <taxon>Enterobacteriaceae</taxon>
        <taxon>Escherichia</taxon>
    </lineage>
</organism>
<comment type="similarity">
    <text evidence="1">Belongs to the UPF0213 family.</text>
</comment>